<evidence type="ECO:0000255" key="1">
    <source>
        <dbReference type="HAMAP-Rule" id="MF_00044"/>
    </source>
</evidence>
<gene>
    <name evidence="1" type="primary">aspS</name>
    <name type="ordered locus">HRM2_02550</name>
</gene>
<proteinExistence type="inferred from homology"/>
<reference key="1">
    <citation type="journal article" date="2009" name="Environ. Microbiol.">
        <title>Genome sequence of Desulfobacterium autotrophicum HRM2, a marine sulfate reducer oxidizing organic carbon completely to carbon dioxide.</title>
        <authorList>
            <person name="Strittmatter A.W."/>
            <person name="Liesegang H."/>
            <person name="Rabus R."/>
            <person name="Decker I."/>
            <person name="Amann J."/>
            <person name="Andres S."/>
            <person name="Henne A."/>
            <person name="Fricke W.F."/>
            <person name="Martinez-Arias R."/>
            <person name="Bartels D."/>
            <person name="Goesmann A."/>
            <person name="Krause L."/>
            <person name="Puehler A."/>
            <person name="Klenk H.P."/>
            <person name="Richter M."/>
            <person name="Schuler M."/>
            <person name="Gloeckner F.O."/>
            <person name="Meyerdierks A."/>
            <person name="Gottschalk G."/>
            <person name="Amann R."/>
        </authorList>
    </citation>
    <scope>NUCLEOTIDE SEQUENCE [LARGE SCALE GENOMIC DNA]</scope>
    <source>
        <strain>ATCC 43914 / DSM 3382 / VKM B-1955 / HRM2</strain>
    </source>
</reference>
<keyword id="KW-0030">Aminoacyl-tRNA synthetase</keyword>
<keyword id="KW-0067">ATP-binding</keyword>
<keyword id="KW-0963">Cytoplasm</keyword>
<keyword id="KW-0436">Ligase</keyword>
<keyword id="KW-0547">Nucleotide-binding</keyword>
<keyword id="KW-0648">Protein biosynthesis</keyword>
<keyword id="KW-1185">Reference proteome</keyword>
<name>SYDND_DESAH</name>
<dbReference type="EC" id="6.1.1.23" evidence="1"/>
<dbReference type="EMBL" id="CP001087">
    <property type="protein sequence ID" value="ACN13377.1"/>
    <property type="molecule type" value="Genomic_DNA"/>
</dbReference>
<dbReference type="RefSeq" id="WP_012662626.1">
    <property type="nucleotide sequence ID" value="NC_012108.1"/>
</dbReference>
<dbReference type="SMR" id="C0QFI1"/>
<dbReference type="STRING" id="177437.HRM2_02550"/>
<dbReference type="KEGG" id="dat:HRM2_02550"/>
<dbReference type="eggNOG" id="COG0173">
    <property type="taxonomic scope" value="Bacteria"/>
</dbReference>
<dbReference type="HOGENOM" id="CLU_014330_3_2_7"/>
<dbReference type="OrthoDB" id="9802326at2"/>
<dbReference type="Proteomes" id="UP000000442">
    <property type="component" value="Chromosome"/>
</dbReference>
<dbReference type="GO" id="GO:0005737">
    <property type="term" value="C:cytoplasm"/>
    <property type="evidence" value="ECO:0007669"/>
    <property type="project" value="UniProtKB-SubCell"/>
</dbReference>
<dbReference type="GO" id="GO:0004815">
    <property type="term" value="F:aspartate-tRNA ligase activity"/>
    <property type="evidence" value="ECO:0007669"/>
    <property type="project" value="UniProtKB-UniRule"/>
</dbReference>
<dbReference type="GO" id="GO:0050560">
    <property type="term" value="F:aspartate-tRNA(Asn) ligase activity"/>
    <property type="evidence" value="ECO:0007669"/>
    <property type="project" value="UniProtKB-EC"/>
</dbReference>
<dbReference type="GO" id="GO:0005524">
    <property type="term" value="F:ATP binding"/>
    <property type="evidence" value="ECO:0007669"/>
    <property type="project" value="UniProtKB-UniRule"/>
</dbReference>
<dbReference type="GO" id="GO:0003676">
    <property type="term" value="F:nucleic acid binding"/>
    <property type="evidence" value="ECO:0007669"/>
    <property type="project" value="InterPro"/>
</dbReference>
<dbReference type="GO" id="GO:0006422">
    <property type="term" value="P:aspartyl-tRNA aminoacylation"/>
    <property type="evidence" value="ECO:0007669"/>
    <property type="project" value="UniProtKB-UniRule"/>
</dbReference>
<dbReference type="CDD" id="cd00777">
    <property type="entry name" value="AspRS_core"/>
    <property type="match status" value="1"/>
</dbReference>
<dbReference type="CDD" id="cd04317">
    <property type="entry name" value="EcAspRS_like_N"/>
    <property type="match status" value="1"/>
</dbReference>
<dbReference type="Gene3D" id="3.30.930.10">
    <property type="entry name" value="Bira Bifunctional Protein, Domain 2"/>
    <property type="match status" value="1"/>
</dbReference>
<dbReference type="Gene3D" id="3.30.1360.30">
    <property type="entry name" value="GAD-like domain"/>
    <property type="match status" value="1"/>
</dbReference>
<dbReference type="Gene3D" id="2.40.50.140">
    <property type="entry name" value="Nucleic acid-binding proteins"/>
    <property type="match status" value="1"/>
</dbReference>
<dbReference type="HAMAP" id="MF_00044">
    <property type="entry name" value="Asp_tRNA_synth_type1"/>
    <property type="match status" value="1"/>
</dbReference>
<dbReference type="InterPro" id="IPR004364">
    <property type="entry name" value="Aa-tRNA-synt_II"/>
</dbReference>
<dbReference type="InterPro" id="IPR006195">
    <property type="entry name" value="aa-tRNA-synth_II"/>
</dbReference>
<dbReference type="InterPro" id="IPR045864">
    <property type="entry name" value="aa-tRNA-synth_II/BPL/LPL"/>
</dbReference>
<dbReference type="InterPro" id="IPR004524">
    <property type="entry name" value="Asp-tRNA-ligase_1"/>
</dbReference>
<dbReference type="InterPro" id="IPR047089">
    <property type="entry name" value="Asp-tRNA-ligase_1_N"/>
</dbReference>
<dbReference type="InterPro" id="IPR002312">
    <property type="entry name" value="Asp/Asn-tRNA-synth_IIb"/>
</dbReference>
<dbReference type="InterPro" id="IPR047090">
    <property type="entry name" value="AspRS_core"/>
</dbReference>
<dbReference type="InterPro" id="IPR004115">
    <property type="entry name" value="GAD-like_sf"/>
</dbReference>
<dbReference type="InterPro" id="IPR029351">
    <property type="entry name" value="GAD_dom"/>
</dbReference>
<dbReference type="InterPro" id="IPR012340">
    <property type="entry name" value="NA-bd_OB-fold"/>
</dbReference>
<dbReference type="InterPro" id="IPR004365">
    <property type="entry name" value="NA-bd_OB_tRNA"/>
</dbReference>
<dbReference type="NCBIfam" id="TIGR00459">
    <property type="entry name" value="aspS_bact"/>
    <property type="match status" value="1"/>
</dbReference>
<dbReference type="NCBIfam" id="NF001750">
    <property type="entry name" value="PRK00476.1"/>
    <property type="match status" value="1"/>
</dbReference>
<dbReference type="PANTHER" id="PTHR22594:SF5">
    <property type="entry name" value="ASPARTATE--TRNA LIGASE, MITOCHONDRIAL"/>
    <property type="match status" value="1"/>
</dbReference>
<dbReference type="PANTHER" id="PTHR22594">
    <property type="entry name" value="ASPARTYL/LYSYL-TRNA SYNTHETASE"/>
    <property type="match status" value="1"/>
</dbReference>
<dbReference type="Pfam" id="PF02938">
    <property type="entry name" value="GAD"/>
    <property type="match status" value="1"/>
</dbReference>
<dbReference type="Pfam" id="PF00152">
    <property type="entry name" value="tRNA-synt_2"/>
    <property type="match status" value="1"/>
</dbReference>
<dbReference type="Pfam" id="PF01336">
    <property type="entry name" value="tRNA_anti-codon"/>
    <property type="match status" value="1"/>
</dbReference>
<dbReference type="PRINTS" id="PR01042">
    <property type="entry name" value="TRNASYNTHASP"/>
</dbReference>
<dbReference type="SUPFAM" id="SSF55681">
    <property type="entry name" value="Class II aaRS and biotin synthetases"/>
    <property type="match status" value="1"/>
</dbReference>
<dbReference type="SUPFAM" id="SSF55261">
    <property type="entry name" value="GAD domain-like"/>
    <property type="match status" value="1"/>
</dbReference>
<dbReference type="SUPFAM" id="SSF50249">
    <property type="entry name" value="Nucleic acid-binding proteins"/>
    <property type="match status" value="1"/>
</dbReference>
<dbReference type="PROSITE" id="PS50862">
    <property type="entry name" value="AA_TRNA_LIGASE_II"/>
    <property type="match status" value="1"/>
</dbReference>
<comment type="function">
    <text evidence="1">Aspartyl-tRNA synthetase with relaxed tRNA specificity since it is able to aspartylate not only its cognate tRNA(Asp) but also tRNA(Asn). Reaction proceeds in two steps: L-aspartate is first activated by ATP to form Asp-AMP and then transferred to the acceptor end of tRNA(Asp/Asn).</text>
</comment>
<comment type="catalytic activity">
    <reaction evidence="1">
        <text>tRNA(Asx) + L-aspartate + ATP = L-aspartyl-tRNA(Asx) + AMP + diphosphate</text>
        <dbReference type="Rhea" id="RHEA:18349"/>
        <dbReference type="Rhea" id="RHEA-COMP:9710"/>
        <dbReference type="Rhea" id="RHEA-COMP:9711"/>
        <dbReference type="ChEBI" id="CHEBI:29991"/>
        <dbReference type="ChEBI" id="CHEBI:30616"/>
        <dbReference type="ChEBI" id="CHEBI:33019"/>
        <dbReference type="ChEBI" id="CHEBI:78442"/>
        <dbReference type="ChEBI" id="CHEBI:78516"/>
        <dbReference type="ChEBI" id="CHEBI:456215"/>
        <dbReference type="EC" id="6.1.1.23"/>
    </reaction>
</comment>
<comment type="subunit">
    <text evidence="1">Homodimer.</text>
</comment>
<comment type="subcellular location">
    <subcellularLocation>
        <location evidence="1">Cytoplasm</location>
    </subcellularLocation>
</comment>
<comment type="similarity">
    <text evidence="1">Belongs to the class-II aminoacyl-tRNA synthetase family. Type 1 subfamily.</text>
</comment>
<accession>C0QFI1</accession>
<sequence>MTDLLGDMRRTHTCGELRVTDVDTEVTLMGWVQRRRDHGGVIFIDFRDKEGITQIVFNPEVNPEVHAKAQTIRSEYVLGVKGRVVNRPDDMVNPKMVTGGIEILVDELKILSRAETPAFQIEDRIEASETVRLKYRHLDLRRPKLQQNIIARHTASRAVRDYLNDLGFLDIETPFLTRSTPEGARDYLVPSRVNHGQFYALPQSPQLFKQMLMISGFDRYYQIVRCFRDEDLRADRQPEFTQIDMEMSFVGEDEIMEITEGLIKTVFKRVRDIDLELPFQRITYAESIDRFGIDRPDMRFGLELNDLSDLVENTGFKVFASVVKKGGLVKAINAKGCANFTRKQIDELTDFAAIYKAKGLAWVKVKADGTWQSPIAKFFTDDEKKAIEVRLDMEKDDIVFFVADNPKITNEALGQLRNELARRLELIDNNTYRFVWVTHFPLVEYDEGEKRYQAIHHPFTAPLEEDLEKLDTDPLNVRSRAYDMVLNGIEIGGGSIRIHSTELQEKVLNTLGIGKEEANDKFGFLLNALGSGTPPHGGLAFGFDRLVMLLCQEESIRDVIAFPKTQRATCLLTEAPSKAAPAQLQELSIRVVNIEE</sequence>
<organism>
    <name type="scientific">Desulforapulum autotrophicum (strain ATCC 43914 / DSM 3382 / VKM B-1955 / HRM2)</name>
    <name type="common">Desulfobacterium autotrophicum</name>
    <dbReference type="NCBI Taxonomy" id="177437"/>
    <lineage>
        <taxon>Bacteria</taxon>
        <taxon>Pseudomonadati</taxon>
        <taxon>Thermodesulfobacteriota</taxon>
        <taxon>Desulfobacteria</taxon>
        <taxon>Desulfobacterales</taxon>
        <taxon>Desulfobacteraceae</taxon>
        <taxon>Desulforapulum</taxon>
    </lineage>
</organism>
<protein>
    <recommendedName>
        <fullName evidence="1">Aspartate--tRNA(Asp/Asn) ligase</fullName>
        <ecNumber evidence="1">6.1.1.23</ecNumber>
    </recommendedName>
    <alternativeName>
        <fullName evidence="1">Aspartyl-tRNA synthetase</fullName>
        <shortName evidence="1">AspRS</shortName>
    </alternativeName>
    <alternativeName>
        <fullName evidence="1">Non-discriminating aspartyl-tRNA synthetase</fullName>
        <shortName evidence="1">ND-AspRS</shortName>
    </alternativeName>
</protein>
<feature type="chain" id="PRO_1000202154" description="Aspartate--tRNA(Asp/Asn) ligase">
    <location>
        <begin position="1"/>
        <end position="596"/>
    </location>
</feature>
<feature type="region of interest" description="Aspartate" evidence="1">
    <location>
        <begin position="206"/>
        <end position="209"/>
    </location>
</feature>
<feature type="binding site" evidence="1">
    <location>
        <position position="182"/>
    </location>
    <ligand>
        <name>L-aspartate</name>
        <dbReference type="ChEBI" id="CHEBI:29991"/>
    </ligand>
</feature>
<feature type="binding site" evidence="1">
    <location>
        <begin position="228"/>
        <end position="230"/>
    </location>
    <ligand>
        <name>ATP</name>
        <dbReference type="ChEBI" id="CHEBI:30616"/>
    </ligand>
</feature>
<feature type="binding site" evidence="1">
    <location>
        <position position="228"/>
    </location>
    <ligand>
        <name>L-aspartate</name>
        <dbReference type="ChEBI" id="CHEBI:29991"/>
    </ligand>
</feature>
<feature type="binding site" evidence="1">
    <location>
        <position position="237"/>
    </location>
    <ligand>
        <name>ATP</name>
        <dbReference type="ChEBI" id="CHEBI:30616"/>
    </ligand>
</feature>
<feature type="binding site" evidence="1">
    <location>
        <position position="456"/>
    </location>
    <ligand>
        <name>L-aspartate</name>
        <dbReference type="ChEBI" id="CHEBI:29991"/>
    </ligand>
</feature>
<feature type="binding site" evidence="1">
    <location>
        <position position="490"/>
    </location>
    <ligand>
        <name>ATP</name>
        <dbReference type="ChEBI" id="CHEBI:30616"/>
    </ligand>
</feature>
<feature type="binding site" evidence="1">
    <location>
        <position position="497"/>
    </location>
    <ligand>
        <name>L-aspartate</name>
        <dbReference type="ChEBI" id="CHEBI:29991"/>
    </ligand>
</feature>
<feature type="binding site" evidence="1">
    <location>
        <begin position="542"/>
        <end position="545"/>
    </location>
    <ligand>
        <name>ATP</name>
        <dbReference type="ChEBI" id="CHEBI:30616"/>
    </ligand>
</feature>
<feature type="site" description="Important for tRNA non-discrimination" evidence="1">
    <location>
        <position position="38"/>
    </location>
</feature>